<evidence type="ECO:0000250" key="1">
    <source>
        <dbReference type="UniProtKB" id="P03901"/>
    </source>
</evidence>
<evidence type="ECO:0000250" key="2">
    <source>
        <dbReference type="UniProtKB" id="P03902"/>
    </source>
</evidence>
<evidence type="ECO:0000255" key="3"/>
<evidence type="ECO:0000305" key="4"/>
<dbReference type="EC" id="7.1.1.2"/>
<dbReference type="EMBL" id="AY582560">
    <property type="protein sequence ID" value="AAT35903.1"/>
    <property type="molecule type" value="Genomic_DNA"/>
</dbReference>
<dbReference type="SMR" id="Q05F85"/>
<dbReference type="GO" id="GO:0005743">
    <property type="term" value="C:mitochondrial inner membrane"/>
    <property type="evidence" value="ECO:0000250"/>
    <property type="project" value="UniProtKB"/>
</dbReference>
<dbReference type="GO" id="GO:0045271">
    <property type="term" value="C:respiratory chain complex I"/>
    <property type="evidence" value="ECO:0000250"/>
    <property type="project" value="UniProtKB"/>
</dbReference>
<dbReference type="GO" id="GO:0008137">
    <property type="term" value="F:NADH dehydrogenase (ubiquinone) activity"/>
    <property type="evidence" value="ECO:0000250"/>
    <property type="project" value="UniProtKB"/>
</dbReference>
<dbReference type="GO" id="GO:0042773">
    <property type="term" value="P:ATP synthesis coupled electron transport"/>
    <property type="evidence" value="ECO:0007669"/>
    <property type="project" value="InterPro"/>
</dbReference>
<dbReference type="FunFam" id="1.10.287.3510:FF:000002">
    <property type="entry name" value="NADH-ubiquinone oxidoreductase chain 4L"/>
    <property type="match status" value="1"/>
</dbReference>
<dbReference type="Gene3D" id="1.10.287.3510">
    <property type="match status" value="1"/>
</dbReference>
<dbReference type="InterPro" id="IPR001133">
    <property type="entry name" value="NADH_UbQ_OxRdtase_chain4L/K"/>
</dbReference>
<dbReference type="InterPro" id="IPR039428">
    <property type="entry name" value="NUOK/Mnh_C1-like"/>
</dbReference>
<dbReference type="PANTHER" id="PTHR11434:SF0">
    <property type="entry name" value="NADH-UBIQUINONE OXIDOREDUCTASE CHAIN 4L"/>
    <property type="match status" value="1"/>
</dbReference>
<dbReference type="PANTHER" id="PTHR11434">
    <property type="entry name" value="NADH-UBIQUINONE OXIDOREDUCTASE SUBUNIT ND4L"/>
    <property type="match status" value="1"/>
</dbReference>
<dbReference type="Pfam" id="PF00420">
    <property type="entry name" value="Oxidored_q2"/>
    <property type="match status" value="1"/>
</dbReference>
<protein>
    <recommendedName>
        <fullName>NADH-ubiquinone oxidoreductase chain 4L</fullName>
        <ecNumber>7.1.1.2</ecNumber>
    </recommendedName>
    <alternativeName>
        <fullName>NADH dehydrogenase subunit 4L</fullName>
    </alternativeName>
</protein>
<proteinExistence type="inferred from homology"/>
<keyword id="KW-0249">Electron transport</keyword>
<keyword id="KW-0472">Membrane</keyword>
<keyword id="KW-0496">Mitochondrion</keyword>
<keyword id="KW-0999">Mitochondrion inner membrane</keyword>
<keyword id="KW-0520">NAD</keyword>
<keyword id="KW-0679">Respiratory chain</keyword>
<keyword id="KW-1278">Translocase</keyword>
<keyword id="KW-0812">Transmembrane</keyword>
<keyword id="KW-1133">Transmembrane helix</keyword>
<keyword id="KW-0813">Transport</keyword>
<keyword id="KW-0830">Ubiquinone</keyword>
<gene>
    <name type="primary">MT-ND4L</name>
    <name type="synonym">MTND4L</name>
    <name type="synonym">NADH4L</name>
    <name type="synonym">ND4L</name>
</gene>
<comment type="function">
    <text evidence="1">Core subunit of the mitochondrial membrane respiratory chain NADH dehydrogenase (Complex I) which catalyzes electron transfer from NADH through the respiratory chain, using ubiquinone as an electron acceptor. Part of the enzyme membrane arm which is embedded in the lipid bilayer and involved in proton translocation.</text>
</comment>
<comment type="catalytic activity">
    <reaction evidence="1">
        <text>a ubiquinone + NADH + 5 H(+)(in) = a ubiquinol + NAD(+) + 4 H(+)(out)</text>
        <dbReference type="Rhea" id="RHEA:29091"/>
        <dbReference type="Rhea" id="RHEA-COMP:9565"/>
        <dbReference type="Rhea" id="RHEA-COMP:9566"/>
        <dbReference type="ChEBI" id="CHEBI:15378"/>
        <dbReference type="ChEBI" id="CHEBI:16389"/>
        <dbReference type="ChEBI" id="CHEBI:17976"/>
        <dbReference type="ChEBI" id="CHEBI:57540"/>
        <dbReference type="ChEBI" id="CHEBI:57945"/>
        <dbReference type="EC" id="7.1.1.2"/>
    </reaction>
    <physiologicalReaction direction="left-to-right" evidence="1">
        <dbReference type="Rhea" id="RHEA:29092"/>
    </physiologicalReaction>
</comment>
<comment type="subunit">
    <text evidence="2">Core subunit of respiratory chain NADH dehydrogenase (Complex I) which is composed of 45 different subunits.</text>
</comment>
<comment type="subcellular location">
    <subcellularLocation>
        <location evidence="2">Mitochondrion inner membrane</location>
        <topology evidence="3">Multi-pass membrane protein</topology>
    </subcellularLocation>
</comment>
<comment type="similarity">
    <text evidence="4">Belongs to the complex I subunit 4L family.</text>
</comment>
<name>NU4LM_AVAOC</name>
<sequence length="98" mass="10759">MPPIFTNVILAFATAFLGTLIFRSHLMSSLLCLEGMMLSLFILSTLIILNMHLTVSFMMPILLLVFAACEAAIGLALLVMVSNTYGLDHIKNLNLLQC</sequence>
<accession>Q05F85</accession>
<reference key="1">
    <citation type="journal article" date="2006" name="Int. J. Primatol.">
        <title>Revision of the mouse lemurs (Microcebus) of Eastern Madagascar.</title>
        <authorList>
            <person name="Louis E.E. Jr."/>
            <person name="Coles M.S."/>
            <person name="Andriantompohavana R."/>
            <person name="Sommer J.A."/>
            <person name="Engberg S.E."/>
            <person name="Zaonarivelo J.R."/>
            <person name="Mayor M.I."/>
            <person name="Brenneman R.A."/>
        </authorList>
    </citation>
    <scope>NUCLEOTIDE SEQUENCE [GENOMIC DNA]</scope>
    <source>
        <strain>Isolate ANK33</strain>
    </source>
</reference>
<feature type="chain" id="PRO_0000274976" description="NADH-ubiquinone oxidoreductase chain 4L">
    <location>
        <begin position="1"/>
        <end position="98"/>
    </location>
</feature>
<feature type="transmembrane region" description="Helical" evidence="3">
    <location>
        <begin position="2"/>
        <end position="22"/>
    </location>
</feature>
<feature type="transmembrane region" description="Helical" evidence="3">
    <location>
        <begin position="29"/>
        <end position="49"/>
    </location>
</feature>
<feature type="transmembrane region" description="Helical" evidence="3">
    <location>
        <begin position="61"/>
        <end position="81"/>
    </location>
</feature>
<geneLocation type="mitochondrion"/>
<organism>
    <name type="scientific">Avahi occidentalis</name>
    <name type="common">Western woolly lemur</name>
    <dbReference type="NCBI Taxonomy" id="132108"/>
    <lineage>
        <taxon>Eukaryota</taxon>
        <taxon>Metazoa</taxon>
        <taxon>Chordata</taxon>
        <taxon>Craniata</taxon>
        <taxon>Vertebrata</taxon>
        <taxon>Euteleostomi</taxon>
        <taxon>Mammalia</taxon>
        <taxon>Eutheria</taxon>
        <taxon>Euarchontoglires</taxon>
        <taxon>Primates</taxon>
        <taxon>Strepsirrhini</taxon>
        <taxon>Lemuriformes</taxon>
        <taxon>Indriidae</taxon>
        <taxon>Avahi</taxon>
    </lineage>
</organism>